<organism>
    <name type="scientific">Arabidopsis thaliana</name>
    <name type="common">Mouse-ear cress</name>
    <dbReference type="NCBI Taxonomy" id="3702"/>
    <lineage>
        <taxon>Eukaryota</taxon>
        <taxon>Viridiplantae</taxon>
        <taxon>Streptophyta</taxon>
        <taxon>Embryophyta</taxon>
        <taxon>Tracheophyta</taxon>
        <taxon>Spermatophyta</taxon>
        <taxon>Magnoliopsida</taxon>
        <taxon>eudicotyledons</taxon>
        <taxon>Gunneridae</taxon>
        <taxon>Pentapetalae</taxon>
        <taxon>rosids</taxon>
        <taxon>malvids</taxon>
        <taxon>Brassicales</taxon>
        <taxon>Brassicaceae</taxon>
        <taxon>Camelineae</taxon>
        <taxon>Arabidopsis</taxon>
    </lineage>
</organism>
<protein>
    <recommendedName>
        <fullName>Phenolic glucoside malonyltransferase 1</fullName>
        <ecNumber evidence="3">2.3.1.-</ecNumber>
        <ecNumber evidence="3">2.3.1.116</ecNumber>
    </recommendedName>
</protein>
<name>PMAT1_ARATH</name>
<keyword id="KW-0007">Acetylation</keyword>
<keyword id="KW-0012">Acyltransferase</keyword>
<keyword id="KW-0216">Detoxification</keyword>
<keyword id="KW-1185">Reference proteome</keyword>
<keyword id="KW-0808">Transferase</keyword>
<reference key="1">
    <citation type="journal article" date="1998" name="DNA Res.">
        <title>Structural analysis of Arabidopsis thaliana chromosome 5. VIII. Sequence features of the regions of 1,081,958 bp covered by seventeen physically assigned P1 and TAC clones.</title>
        <authorList>
            <person name="Asamizu E."/>
            <person name="Sato S."/>
            <person name="Kaneko T."/>
            <person name="Nakamura Y."/>
            <person name="Kotani H."/>
            <person name="Miyajima N."/>
            <person name="Tabata S."/>
        </authorList>
    </citation>
    <scope>NUCLEOTIDE SEQUENCE [LARGE SCALE GENOMIC DNA]</scope>
    <source>
        <strain>cv. Columbia</strain>
    </source>
</reference>
<reference key="2">
    <citation type="journal article" date="2017" name="Plant J.">
        <title>Araport11: a complete reannotation of the Arabidopsis thaliana reference genome.</title>
        <authorList>
            <person name="Cheng C.Y."/>
            <person name="Krishnakumar V."/>
            <person name="Chan A.P."/>
            <person name="Thibaud-Nissen F."/>
            <person name="Schobel S."/>
            <person name="Town C.D."/>
        </authorList>
    </citation>
    <scope>GENOME REANNOTATION</scope>
    <source>
        <strain>cv. Columbia</strain>
    </source>
</reference>
<reference key="3">
    <citation type="journal article" date="2003" name="Science">
        <title>Empirical analysis of transcriptional activity in the Arabidopsis genome.</title>
        <authorList>
            <person name="Yamada K."/>
            <person name="Lim J."/>
            <person name="Dale J.M."/>
            <person name="Chen H."/>
            <person name="Shinn P."/>
            <person name="Palm C.J."/>
            <person name="Southwick A.M."/>
            <person name="Wu H.C."/>
            <person name="Kim C.J."/>
            <person name="Nguyen M."/>
            <person name="Pham P.K."/>
            <person name="Cheuk R.F."/>
            <person name="Karlin-Newmann G."/>
            <person name="Liu S.X."/>
            <person name="Lam B."/>
            <person name="Sakano H."/>
            <person name="Wu T."/>
            <person name="Yu G."/>
            <person name="Miranda M."/>
            <person name="Quach H.L."/>
            <person name="Tripp M."/>
            <person name="Chang C.H."/>
            <person name="Lee J.M."/>
            <person name="Toriumi M.J."/>
            <person name="Chan M.M."/>
            <person name="Tang C.C."/>
            <person name="Onodera C.S."/>
            <person name="Deng J.M."/>
            <person name="Akiyama K."/>
            <person name="Ansari Y."/>
            <person name="Arakawa T."/>
            <person name="Banh J."/>
            <person name="Banno F."/>
            <person name="Bowser L."/>
            <person name="Brooks S.Y."/>
            <person name="Carninci P."/>
            <person name="Chao Q."/>
            <person name="Choy N."/>
            <person name="Enju A."/>
            <person name="Goldsmith A.D."/>
            <person name="Gurjal M."/>
            <person name="Hansen N.F."/>
            <person name="Hayashizaki Y."/>
            <person name="Johnson-Hopson C."/>
            <person name="Hsuan V.W."/>
            <person name="Iida K."/>
            <person name="Karnes M."/>
            <person name="Khan S."/>
            <person name="Koesema E."/>
            <person name="Ishida J."/>
            <person name="Jiang P.X."/>
            <person name="Jones T."/>
            <person name="Kawai J."/>
            <person name="Kamiya A."/>
            <person name="Meyers C."/>
            <person name="Nakajima M."/>
            <person name="Narusaka M."/>
            <person name="Seki M."/>
            <person name="Sakurai T."/>
            <person name="Satou M."/>
            <person name="Tamse R."/>
            <person name="Vaysberg M."/>
            <person name="Wallender E.K."/>
            <person name="Wong C."/>
            <person name="Yamamura Y."/>
            <person name="Yuan S."/>
            <person name="Shinozaki K."/>
            <person name="Davis R.W."/>
            <person name="Theologis A."/>
            <person name="Ecker J.R."/>
        </authorList>
    </citation>
    <scope>NUCLEOTIDE SEQUENCE [LARGE SCALE MRNA]</scope>
    <source>
        <strain>cv. Columbia</strain>
    </source>
</reference>
<reference key="4">
    <citation type="journal article" date="2007" name="Plant J.">
        <title>Convergent evolution in the BAHD family of acyl transferases: identification and characterization of anthocyanin acyl transferases from Arabidopsis thaliana.</title>
        <authorList>
            <person name="Luo J."/>
            <person name="Nishiyama Y."/>
            <person name="Fuell C."/>
            <person name="Taguchi G."/>
            <person name="Elliott K."/>
            <person name="Hill L."/>
            <person name="Tanaka Y."/>
            <person name="Kitayama M."/>
            <person name="Yamazaki M."/>
            <person name="Bailey P."/>
            <person name="Parr A."/>
            <person name="Michael A.J."/>
            <person name="Saito K."/>
            <person name="Martin C."/>
        </authorList>
    </citation>
    <scope>IDENTIFICATION</scope>
    <scope>INDUCTION</scope>
</reference>
<reference key="5">
    <citation type="journal article" date="2010" name="Plant J.">
        <title>Malonylation is a key reaction in the metabolism of xenobiotic phenolic glucosides in Arabidopsis and tobacco.</title>
        <authorList>
            <person name="Taguchi G."/>
            <person name="Ubukata T."/>
            <person name="Nozue H."/>
            <person name="Kobayashi Y."/>
            <person name="Takahi M."/>
            <person name="Yamamoto H."/>
            <person name="Hayashida N."/>
        </authorList>
    </citation>
    <scope>FUNCTION</scope>
    <scope>CATALYTIC ACTIVITY</scope>
    <scope>BIOPHYSICOCHEMICAL PROPERTIES</scope>
    <scope>DISRUPTION PHENOTYPE</scope>
</reference>
<reference key="6">
    <citation type="journal article" date="2012" name="Mol. Cell. Proteomics">
        <title>Comparative large-scale characterisation of plant vs. mammal proteins reveals similar and idiosyncratic N-alpha acetylation features.</title>
        <authorList>
            <person name="Bienvenut W.V."/>
            <person name="Sumpton D."/>
            <person name="Martinez A."/>
            <person name="Lilla S."/>
            <person name="Espagne C."/>
            <person name="Meinnel T."/>
            <person name="Giglione C."/>
        </authorList>
    </citation>
    <scope>ACETYLATION [LARGE SCALE ANALYSIS] AT MET-1</scope>
    <scope>IDENTIFICATION BY MASS SPECTROMETRY [LARGE SCALE ANALYSIS]</scope>
</reference>
<accession>Q940Z5</accession>
<accession>Q9FID3</accession>
<proteinExistence type="evidence at protein level"/>
<evidence type="ECO:0000250" key="1">
    <source>
        <dbReference type="UniProtKB" id="Q589Y0"/>
    </source>
</evidence>
<evidence type="ECO:0000250" key="2">
    <source>
        <dbReference type="UniProtKB" id="Q8W1W9"/>
    </source>
</evidence>
<evidence type="ECO:0000269" key="3">
    <source>
    </source>
</evidence>
<evidence type="ECO:0000305" key="4"/>
<evidence type="ECO:0007744" key="5">
    <source>
    </source>
</evidence>
<dbReference type="EC" id="2.3.1.-" evidence="3"/>
<dbReference type="EC" id="2.3.1.116" evidence="3"/>
<dbReference type="EMBL" id="AB016892">
    <property type="protein sequence ID" value="BAB10829.1"/>
    <property type="status" value="ALT_SEQ"/>
    <property type="molecule type" value="Genomic_DNA"/>
</dbReference>
<dbReference type="EMBL" id="CP002688">
    <property type="protein sequence ID" value="AED94391.1"/>
    <property type="molecule type" value="Genomic_DNA"/>
</dbReference>
<dbReference type="EMBL" id="AY052335">
    <property type="protein sequence ID" value="AAK96528.1"/>
    <property type="molecule type" value="mRNA"/>
</dbReference>
<dbReference type="EMBL" id="BT002269">
    <property type="protein sequence ID" value="AAN72280.1"/>
    <property type="molecule type" value="mRNA"/>
</dbReference>
<dbReference type="RefSeq" id="NP_568561.4">
    <property type="nucleotide sequence ID" value="NM_123267.6"/>
</dbReference>
<dbReference type="SMR" id="Q940Z5"/>
<dbReference type="STRING" id="3702.Q940Z5"/>
<dbReference type="GlyGen" id="Q940Z5">
    <property type="glycosylation" value="1 site"/>
</dbReference>
<dbReference type="iPTMnet" id="Q940Z5"/>
<dbReference type="PaxDb" id="3702-AT5G39050.1"/>
<dbReference type="ProteomicsDB" id="234935"/>
<dbReference type="EnsemblPlants" id="AT5G39050.1">
    <property type="protein sequence ID" value="AT5G39050.1"/>
    <property type="gene ID" value="AT5G39050"/>
</dbReference>
<dbReference type="GeneID" id="833897"/>
<dbReference type="Gramene" id="AT5G39050.1">
    <property type="protein sequence ID" value="AT5G39050.1"/>
    <property type="gene ID" value="AT5G39050"/>
</dbReference>
<dbReference type="KEGG" id="ath:AT5G39050"/>
<dbReference type="Araport" id="AT5G39050"/>
<dbReference type="TAIR" id="AT5G39050">
    <property type="gene designation" value="PMAT1"/>
</dbReference>
<dbReference type="eggNOG" id="ENOG502QPXT">
    <property type="taxonomic scope" value="Eukaryota"/>
</dbReference>
<dbReference type="HOGENOM" id="CLU_014546_7_0_1"/>
<dbReference type="InParanoid" id="Q940Z5"/>
<dbReference type="OMA" id="NCINPAI"/>
<dbReference type="PhylomeDB" id="Q940Z5"/>
<dbReference type="BioCyc" id="ARA:AT5G39050-MONOMER"/>
<dbReference type="BioCyc" id="MetaCyc:AT5G39050-MONOMER"/>
<dbReference type="PRO" id="PR:Q940Z5"/>
<dbReference type="Proteomes" id="UP000006548">
    <property type="component" value="Chromosome 5"/>
</dbReference>
<dbReference type="ExpressionAtlas" id="Q940Z5">
    <property type="expression patterns" value="baseline and differential"/>
</dbReference>
<dbReference type="GO" id="GO:0047165">
    <property type="term" value="F:flavonol-3-O-beta-glucoside O-malonyltransferase activity"/>
    <property type="evidence" value="ECO:0007669"/>
    <property type="project" value="RHEA"/>
</dbReference>
<dbReference type="GO" id="GO:0050736">
    <property type="term" value="F:O-malonyltransferase activity"/>
    <property type="evidence" value="ECO:0000314"/>
    <property type="project" value="TAIR"/>
</dbReference>
<dbReference type="GO" id="GO:0009636">
    <property type="term" value="P:response to toxic substance"/>
    <property type="evidence" value="ECO:0007669"/>
    <property type="project" value="UniProtKB-KW"/>
</dbReference>
<dbReference type="FunFam" id="3.30.559.10:FF:000035">
    <property type="entry name" value="Phenolic glucoside malonyltransferase 1"/>
    <property type="match status" value="1"/>
</dbReference>
<dbReference type="FunFam" id="3.30.559.10:FF:000046">
    <property type="entry name" value="Phenolic glucoside malonyltransferase 1"/>
    <property type="match status" value="1"/>
</dbReference>
<dbReference type="Gene3D" id="3.30.559.10">
    <property type="entry name" value="Chloramphenicol acetyltransferase-like domain"/>
    <property type="match status" value="2"/>
</dbReference>
<dbReference type="InterPro" id="IPR023213">
    <property type="entry name" value="CAT-like_dom_sf"/>
</dbReference>
<dbReference type="InterPro" id="IPR051504">
    <property type="entry name" value="Plant_metabolite_acyltrans"/>
</dbReference>
<dbReference type="PANTHER" id="PTHR31625">
    <property type="match status" value="1"/>
</dbReference>
<dbReference type="Pfam" id="PF02458">
    <property type="entry name" value="Transferase"/>
    <property type="match status" value="1"/>
</dbReference>
<dbReference type="SUPFAM" id="SSF52777">
    <property type="entry name" value="CoA-dependent acyltransferases"/>
    <property type="match status" value="1"/>
</dbReference>
<sequence>MVNEEMESSLKVIDVARVTPSNSDSSESLTLPLTFFDLLWYKLHAVERVIFYKLTDASRPFFDSVIVPNLKTSLSSSLSHYLPLAGKLVWEPLDPKPKIVYTPNDAVSFTVAESNADFSRLTGKEPFPTTELYPLVPELHVSDDSASAVSFQVTLFPNQGFCISVNAHHAVLDGKTTTNFLKSWARTCKNQDSFLPQDLIPVYDRTVIKDPMDLDTKILNAWHRVAKVFTGGKEPENPKSLKLLWSPEIGPDVFRYTLNLTREDIQKLRERLKKESSSSSVSSSPKELRLSTFVIVYSYALTCLIKARGGDPSRPVGYGFAVDCRSLMVPPVPSSYFGNCVSACFKMSLTAETFMSEEGFLAAARMVSDSVEALDENVALKIPEILEGFTTLSPGTQVLSVAGSTRFGVYGLDFGWGRPEKVVVVSIDQGEAISFAESRDGSGGVELGFSLKKHEMDVLVDLLHKGLEN</sequence>
<gene>
    <name type="primary">PMAT1</name>
    <name type="ordered locus">At5g39050</name>
    <name type="ORF">MXF12.60</name>
</gene>
<feature type="chain" id="PRO_0000419542" description="Phenolic glucoside malonyltransferase 1">
    <location>
        <begin position="1"/>
        <end position="469"/>
    </location>
</feature>
<feature type="short sequence motif" description="HXXXD motif" evidence="1">
    <location>
        <begin position="169"/>
        <end position="173"/>
    </location>
</feature>
<feature type="short sequence motif" description="DFGWG motif" evidence="1">
    <location>
        <begin position="413"/>
        <end position="417"/>
    </location>
</feature>
<feature type="active site" description="Proton acceptor" evidence="2">
    <location>
        <position position="169"/>
    </location>
</feature>
<feature type="active site" description="Proton acceptor" evidence="2">
    <location>
        <position position="413"/>
    </location>
</feature>
<feature type="binding site" evidence="1">
    <location>
        <begin position="291"/>
        <end position="292"/>
    </location>
    <ligand>
        <name>malonyl-CoA</name>
        <dbReference type="ChEBI" id="CHEBI:57384"/>
    </ligand>
</feature>
<feature type="modified residue" description="N-acetylmethionine" evidence="5">
    <location>
        <position position="1"/>
    </location>
</feature>
<comment type="function">
    <text evidence="3">Malonyltransferase acting on xenobiotic glucosides. Has activity toward 2-Naphthol glucoside (2NAG), 1-Naphthol glucoside (1NAG), kaempferol 7-O-glucoside, kaempferol 3-O-glucoside, hydroxycoumarin glucosides, phenol-glucosides and isoflavone glucoside (daidzin), but not toward 4-coumaroyl glucoside, kaempferol 3,7-O-diglucoside, salicylic acid glucoside and phlorizin. In vivo, seems to be involved in the malonylation of 2-Naphthol glucoside while PMAT2 would be involved in the malonylation of 4-methylumbelliferone glucoside or 4-nitrophenyl glucoside.</text>
</comment>
<comment type="catalytic activity">
    <reaction evidence="3">
        <text>a flavonol 3-O-beta-D-glucoside + malonyl-CoA = a flavonol 3-O-(6-O-malonyl-beta-D-glucoside) + CoA</text>
        <dbReference type="Rhea" id="RHEA:20085"/>
        <dbReference type="ChEBI" id="CHEBI:16816"/>
        <dbReference type="ChEBI" id="CHEBI:57287"/>
        <dbReference type="ChEBI" id="CHEBI:57384"/>
        <dbReference type="ChEBI" id="CHEBI:58034"/>
        <dbReference type="EC" id="2.3.1.116"/>
    </reaction>
    <physiologicalReaction direction="left-to-right" evidence="3">
        <dbReference type="Rhea" id="RHEA:20086"/>
    </physiologicalReaction>
</comment>
<comment type="catalytic activity">
    <reaction evidence="3">
        <text>a flavonol 7-O-beta-D-glucoside + malonyl-CoA = a flavonol 7-O-(6-O-malonyl-beta-D-glucoside) + CoA</text>
        <dbReference type="Rhea" id="RHEA:58796"/>
        <dbReference type="ChEBI" id="CHEBI:52144"/>
        <dbReference type="ChEBI" id="CHEBI:57287"/>
        <dbReference type="ChEBI" id="CHEBI:57384"/>
        <dbReference type="ChEBI" id="CHEBI:142805"/>
    </reaction>
    <physiologicalReaction direction="left-to-right" evidence="3">
        <dbReference type="Rhea" id="RHEA:58797"/>
    </physiologicalReaction>
</comment>
<comment type="biophysicochemical properties">
    <kinetics>
        <KM evidence="3">85 uM for 2-Naphthol glucoside</KM>
        <KM evidence="3">160 uM for 1-Naphthol glucoside</KM>
        <KM evidence="3">31 uM for kaempferol 7-O-glucoside</KM>
        <KM evidence="3">1.6 mM for 4-nitrophenyl glucoside</KM>
        <KM evidence="3">0.55 mM for 4-methylumbelliferone glucoside</KM>
        <KM evidence="3">2.3 uM for malonyl-CoA</KM>
        <text>kcat is 40 sec(-1) for 2-Naphthol glucoside. kcat is 46 sec(-1) for 1-Naphthol glucoside. kcat is 33 sec(-1) for kaempferol 7-O-glucoside. kcat is 120 sec(-1) for 4-nitrophenyl glucoside. kcat is 19 sec(-1) for 4-methylumbelliferone glucoside. kcat is 23 sec(-1) for malonyl-CoA.</text>
    </kinetics>
</comment>
<comment type="disruption phenotype">
    <text evidence="3">No visible phenotype, but no malonylation of glucosides.</text>
</comment>
<comment type="similarity">
    <text evidence="4">Belongs to the plant acyltransferase family. Phenolic glucoside malonyltransferase subfamily.</text>
</comment>
<comment type="sequence caution" evidence="4">
    <conflict type="erroneous gene model prediction">
        <sequence resource="EMBL-CDS" id="BAB10829"/>
    </conflict>
</comment>